<protein>
    <recommendedName>
        <fullName evidence="1">ATP synthase subunit b, chloroplastic</fullName>
    </recommendedName>
    <alternativeName>
        <fullName evidence="1">ATP synthase F(0) sector subunit b</fullName>
    </alternativeName>
    <alternativeName>
        <fullName evidence="1">ATPase subunit I</fullName>
    </alternativeName>
</protein>
<organism>
    <name type="scientific">Lepidium virginicum</name>
    <name type="common">Virginia pepperweed</name>
    <dbReference type="NCBI Taxonomy" id="59292"/>
    <lineage>
        <taxon>Eukaryota</taxon>
        <taxon>Viridiplantae</taxon>
        <taxon>Streptophyta</taxon>
        <taxon>Embryophyta</taxon>
        <taxon>Tracheophyta</taxon>
        <taxon>Spermatophyta</taxon>
        <taxon>Magnoliopsida</taxon>
        <taxon>eudicotyledons</taxon>
        <taxon>Gunneridae</taxon>
        <taxon>Pentapetalae</taxon>
        <taxon>rosids</taxon>
        <taxon>malvids</taxon>
        <taxon>Brassicales</taxon>
        <taxon>Brassicaceae</taxon>
        <taxon>Lepidieae</taxon>
        <taxon>Lepidium</taxon>
    </lineage>
</organism>
<keyword id="KW-0066">ATP synthesis</keyword>
<keyword id="KW-0138">CF(0)</keyword>
<keyword id="KW-0150">Chloroplast</keyword>
<keyword id="KW-0375">Hydrogen ion transport</keyword>
<keyword id="KW-0406">Ion transport</keyword>
<keyword id="KW-0472">Membrane</keyword>
<keyword id="KW-0934">Plastid</keyword>
<keyword id="KW-0793">Thylakoid</keyword>
<keyword id="KW-0812">Transmembrane</keyword>
<keyword id="KW-1133">Transmembrane helix</keyword>
<keyword id="KW-0813">Transport</keyword>
<sequence>MKNLTDSFVYLGHWPSAGSFGFNTDILATNPINLSVVLGVLIFFGKGVLNDLLDNRKQRILNTIRNSDELREGAIQQLENARARLRKVETEADKFRVNGYSEIEREKLNLINSTDKTLKQLENYKNETILFEQQKTINQVRERVFQQALQGAIGTLNSCLNNELHLRTINANIGMFGTMKETTD</sequence>
<evidence type="ECO:0000255" key="1">
    <source>
        <dbReference type="HAMAP-Rule" id="MF_01398"/>
    </source>
</evidence>
<gene>
    <name evidence="1" type="primary">atpF</name>
</gene>
<reference key="1">
    <citation type="submission" date="2007-03" db="EMBL/GenBank/DDBJ databases">
        <title>Sequencing analysis of Lepidium virginicum JO26 chloroplast DNA.</title>
        <authorList>
            <person name="Hosouchi T."/>
            <person name="Tsuruoka H."/>
            <person name="Kotani H."/>
        </authorList>
    </citation>
    <scope>NUCLEOTIDE SEQUENCE [LARGE SCALE GENOMIC DNA]</scope>
</reference>
<accession>A4QL92</accession>
<dbReference type="EMBL" id="AP009374">
    <property type="protein sequence ID" value="BAF50447.1"/>
    <property type="molecule type" value="Genomic_DNA"/>
</dbReference>
<dbReference type="RefSeq" id="YP_001123623.1">
    <property type="nucleotide sequence ID" value="NC_009273.1"/>
</dbReference>
<dbReference type="SMR" id="A4QL92"/>
<dbReference type="GeneID" id="4961996"/>
<dbReference type="GO" id="GO:0009535">
    <property type="term" value="C:chloroplast thylakoid membrane"/>
    <property type="evidence" value="ECO:0007669"/>
    <property type="project" value="UniProtKB-SubCell"/>
</dbReference>
<dbReference type="GO" id="GO:0045259">
    <property type="term" value="C:proton-transporting ATP synthase complex"/>
    <property type="evidence" value="ECO:0007669"/>
    <property type="project" value="UniProtKB-KW"/>
</dbReference>
<dbReference type="GO" id="GO:0046933">
    <property type="term" value="F:proton-transporting ATP synthase activity, rotational mechanism"/>
    <property type="evidence" value="ECO:0007669"/>
    <property type="project" value="UniProtKB-UniRule"/>
</dbReference>
<dbReference type="CDD" id="cd06503">
    <property type="entry name" value="ATP-synt_Fo_b"/>
    <property type="match status" value="1"/>
</dbReference>
<dbReference type="HAMAP" id="MF_01398">
    <property type="entry name" value="ATP_synth_b_bprime"/>
    <property type="match status" value="1"/>
</dbReference>
<dbReference type="InterPro" id="IPR002146">
    <property type="entry name" value="ATP_synth_b/b'su_bac/chlpt"/>
</dbReference>
<dbReference type="PANTHER" id="PTHR34264">
    <property type="entry name" value="ATP SYNTHASE SUBUNIT B, CHLOROPLASTIC"/>
    <property type="match status" value="1"/>
</dbReference>
<dbReference type="PANTHER" id="PTHR34264:SF3">
    <property type="entry name" value="ATP SYNTHASE SUBUNIT B, CHLOROPLASTIC"/>
    <property type="match status" value="1"/>
</dbReference>
<dbReference type="Pfam" id="PF00430">
    <property type="entry name" value="ATP-synt_B"/>
    <property type="match status" value="1"/>
</dbReference>
<proteinExistence type="inferred from homology"/>
<geneLocation type="chloroplast"/>
<feature type="chain" id="PRO_0000368946" description="ATP synthase subunit b, chloroplastic">
    <location>
        <begin position="1"/>
        <end position="184"/>
    </location>
</feature>
<feature type="transmembrane region" description="Helical" evidence="1">
    <location>
        <begin position="27"/>
        <end position="49"/>
    </location>
</feature>
<comment type="function">
    <text evidence="1">F(1)F(0) ATP synthase produces ATP from ADP in the presence of a proton or sodium gradient. F-type ATPases consist of two structural domains, F(1) containing the extramembraneous catalytic core and F(0) containing the membrane proton channel, linked together by a central stalk and a peripheral stalk. During catalysis, ATP synthesis in the catalytic domain of F(1) is coupled via a rotary mechanism of the central stalk subunits to proton translocation.</text>
</comment>
<comment type="function">
    <text evidence="1">Component of the F(0) channel, it forms part of the peripheral stalk, linking F(1) to F(0).</text>
</comment>
<comment type="subunit">
    <text evidence="1">F-type ATPases have 2 components, F(1) - the catalytic core - and F(0) - the membrane proton channel. F(1) has five subunits: alpha(3), beta(3), gamma(1), delta(1), epsilon(1). F(0) has four main subunits: a(1), b(1), b'(1) and c(10-14). The alpha and beta chains form an alternating ring which encloses part of the gamma chain. F(1) is attached to F(0) by a central stalk formed by the gamma and epsilon chains, while a peripheral stalk is formed by the delta, b and b' chains.</text>
</comment>
<comment type="subcellular location">
    <subcellularLocation>
        <location evidence="1">Plastid</location>
        <location evidence="1">Chloroplast thylakoid membrane</location>
        <topology evidence="1">Single-pass membrane protein</topology>
    </subcellularLocation>
</comment>
<comment type="miscellaneous">
    <text>In plastids the F-type ATPase is also known as CF(1)CF(0).</text>
</comment>
<comment type="similarity">
    <text evidence="1">Belongs to the ATPase B chain family.</text>
</comment>
<name>ATPF_LEPVR</name>